<sequence length="258" mass="27202">MMNPLIIKLGGVLLDSEEALERLFSALVNYRESHQRPLVIVHGGGCVVDELMKGLNLPVKKKNGLRVTPADQIDIITGALAGTANKTLLAWAKKHQIAAVGLFLGDGDSVKVTQLDEELGHVGLAQPGSPKLINTLLENGYLPVVSSIGVTDEGQLMNVNADQAATALAATLGADLILLSDVSGILDGKGQRIAEMTAAKAEQLIEQGIITDGMIVKVNAALDAARTLGRPVDIASWRHAEQLPALFNGMPMGTRILV</sequence>
<gene>
    <name evidence="1" type="primary">argB</name>
    <name type="ordered locus">SDY_3794</name>
</gene>
<reference key="1">
    <citation type="journal article" date="2005" name="Nucleic Acids Res.">
        <title>Genome dynamics and diversity of Shigella species, the etiologic agents of bacillary dysentery.</title>
        <authorList>
            <person name="Yang F."/>
            <person name="Yang J."/>
            <person name="Zhang X."/>
            <person name="Chen L."/>
            <person name="Jiang Y."/>
            <person name="Yan Y."/>
            <person name="Tang X."/>
            <person name="Wang J."/>
            <person name="Xiong Z."/>
            <person name="Dong J."/>
            <person name="Xue Y."/>
            <person name="Zhu Y."/>
            <person name="Xu X."/>
            <person name="Sun L."/>
            <person name="Chen S."/>
            <person name="Nie H."/>
            <person name="Peng J."/>
            <person name="Xu J."/>
            <person name="Wang Y."/>
            <person name="Yuan Z."/>
            <person name="Wen Y."/>
            <person name="Yao Z."/>
            <person name="Shen Y."/>
            <person name="Qiang B."/>
            <person name="Hou Y."/>
            <person name="Yu J."/>
            <person name="Jin Q."/>
        </authorList>
    </citation>
    <scope>NUCLEOTIDE SEQUENCE [LARGE SCALE GENOMIC DNA]</scope>
    <source>
        <strain>Sd197</strain>
    </source>
</reference>
<evidence type="ECO:0000255" key="1">
    <source>
        <dbReference type="HAMAP-Rule" id="MF_00082"/>
    </source>
</evidence>
<comment type="function">
    <text evidence="1">Catalyzes the ATP-dependent phosphorylation of N-acetyl-L-glutamate.</text>
</comment>
<comment type="catalytic activity">
    <reaction evidence="1">
        <text>N-acetyl-L-glutamate + ATP = N-acetyl-L-glutamyl 5-phosphate + ADP</text>
        <dbReference type="Rhea" id="RHEA:14629"/>
        <dbReference type="ChEBI" id="CHEBI:30616"/>
        <dbReference type="ChEBI" id="CHEBI:44337"/>
        <dbReference type="ChEBI" id="CHEBI:57936"/>
        <dbReference type="ChEBI" id="CHEBI:456216"/>
        <dbReference type="EC" id="2.7.2.8"/>
    </reaction>
</comment>
<comment type="pathway">
    <text evidence="1">Amino-acid biosynthesis; L-arginine biosynthesis; N(2)-acetyl-L-ornithine from L-glutamate: step 2/4.</text>
</comment>
<comment type="subunit">
    <text evidence="1">Homodimer.</text>
</comment>
<comment type="subcellular location">
    <subcellularLocation>
        <location evidence="1">Cytoplasm</location>
    </subcellularLocation>
</comment>
<comment type="similarity">
    <text evidence="1">Belongs to the acetylglutamate kinase family. ArgB subfamily.</text>
</comment>
<accession>Q32AB6</accession>
<protein>
    <recommendedName>
        <fullName evidence="1">Acetylglutamate kinase</fullName>
        <ecNumber evidence="1">2.7.2.8</ecNumber>
    </recommendedName>
    <alternativeName>
        <fullName evidence="1">N-acetyl-L-glutamate 5-phosphotransferase</fullName>
    </alternativeName>
    <alternativeName>
        <fullName evidence="1">NAG kinase</fullName>
        <shortName evidence="1">NAGK</shortName>
    </alternativeName>
</protein>
<name>ARGB_SHIDS</name>
<dbReference type="EC" id="2.7.2.8" evidence="1"/>
<dbReference type="EMBL" id="CP000034">
    <property type="protein sequence ID" value="ABB63739.1"/>
    <property type="molecule type" value="Genomic_DNA"/>
</dbReference>
<dbReference type="RefSeq" id="WP_078164571.1">
    <property type="nucleotide sequence ID" value="NC_007606.1"/>
</dbReference>
<dbReference type="SMR" id="Q32AB6"/>
<dbReference type="STRING" id="300267.SDY_3794"/>
<dbReference type="EnsemblBacteria" id="ABB63739">
    <property type="protein sequence ID" value="ABB63739"/>
    <property type="gene ID" value="SDY_3794"/>
</dbReference>
<dbReference type="KEGG" id="sdy:SDY_3794"/>
<dbReference type="HOGENOM" id="CLU_053680_1_1_6"/>
<dbReference type="UniPathway" id="UPA00068">
    <property type="reaction ID" value="UER00107"/>
</dbReference>
<dbReference type="Proteomes" id="UP000002716">
    <property type="component" value="Chromosome"/>
</dbReference>
<dbReference type="GO" id="GO:0005737">
    <property type="term" value="C:cytoplasm"/>
    <property type="evidence" value="ECO:0007669"/>
    <property type="project" value="UniProtKB-SubCell"/>
</dbReference>
<dbReference type="GO" id="GO:0003991">
    <property type="term" value="F:acetylglutamate kinase activity"/>
    <property type="evidence" value="ECO:0007669"/>
    <property type="project" value="UniProtKB-UniRule"/>
</dbReference>
<dbReference type="GO" id="GO:0005524">
    <property type="term" value="F:ATP binding"/>
    <property type="evidence" value="ECO:0007669"/>
    <property type="project" value="UniProtKB-UniRule"/>
</dbReference>
<dbReference type="GO" id="GO:0042450">
    <property type="term" value="P:arginine biosynthetic process via ornithine"/>
    <property type="evidence" value="ECO:0007669"/>
    <property type="project" value="UniProtKB-UniRule"/>
</dbReference>
<dbReference type="GO" id="GO:0006526">
    <property type="term" value="P:L-arginine biosynthetic process"/>
    <property type="evidence" value="ECO:0007669"/>
    <property type="project" value="UniProtKB-UniPathway"/>
</dbReference>
<dbReference type="CDD" id="cd04249">
    <property type="entry name" value="AAK_NAGK-NC"/>
    <property type="match status" value="1"/>
</dbReference>
<dbReference type="FunFam" id="3.40.1160.10:FF:000008">
    <property type="entry name" value="Acetylglutamate kinase"/>
    <property type="match status" value="1"/>
</dbReference>
<dbReference type="Gene3D" id="3.40.1160.10">
    <property type="entry name" value="Acetylglutamate kinase-like"/>
    <property type="match status" value="1"/>
</dbReference>
<dbReference type="HAMAP" id="MF_00082">
    <property type="entry name" value="ArgB"/>
    <property type="match status" value="1"/>
</dbReference>
<dbReference type="InterPro" id="IPR036393">
    <property type="entry name" value="AceGlu_kinase-like_sf"/>
</dbReference>
<dbReference type="InterPro" id="IPR004662">
    <property type="entry name" value="AcgluKinase_fam"/>
</dbReference>
<dbReference type="InterPro" id="IPR037528">
    <property type="entry name" value="ArgB"/>
</dbReference>
<dbReference type="InterPro" id="IPR001048">
    <property type="entry name" value="Asp/Glu/Uridylate_kinase"/>
</dbReference>
<dbReference type="InterPro" id="IPR041731">
    <property type="entry name" value="NAGK-NC"/>
</dbReference>
<dbReference type="NCBIfam" id="TIGR00761">
    <property type="entry name" value="argB"/>
    <property type="match status" value="1"/>
</dbReference>
<dbReference type="PANTHER" id="PTHR23342">
    <property type="entry name" value="N-ACETYLGLUTAMATE SYNTHASE"/>
    <property type="match status" value="1"/>
</dbReference>
<dbReference type="PANTHER" id="PTHR23342:SF0">
    <property type="entry name" value="N-ACETYLGLUTAMATE SYNTHASE, MITOCHONDRIAL"/>
    <property type="match status" value="1"/>
</dbReference>
<dbReference type="Pfam" id="PF00696">
    <property type="entry name" value="AA_kinase"/>
    <property type="match status" value="1"/>
</dbReference>
<dbReference type="PIRSF" id="PIRSF000728">
    <property type="entry name" value="NAGK"/>
    <property type="match status" value="1"/>
</dbReference>
<dbReference type="SUPFAM" id="SSF53633">
    <property type="entry name" value="Carbamate kinase-like"/>
    <property type="match status" value="1"/>
</dbReference>
<organism>
    <name type="scientific">Shigella dysenteriae serotype 1 (strain Sd197)</name>
    <dbReference type="NCBI Taxonomy" id="300267"/>
    <lineage>
        <taxon>Bacteria</taxon>
        <taxon>Pseudomonadati</taxon>
        <taxon>Pseudomonadota</taxon>
        <taxon>Gammaproteobacteria</taxon>
        <taxon>Enterobacterales</taxon>
        <taxon>Enterobacteriaceae</taxon>
        <taxon>Shigella</taxon>
    </lineage>
</organism>
<feature type="chain" id="PRO_0000264759" description="Acetylglutamate kinase">
    <location>
        <begin position="1"/>
        <end position="258"/>
    </location>
</feature>
<feature type="binding site" evidence="1">
    <location>
        <begin position="44"/>
        <end position="45"/>
    </location>
    <ligand>
        <name>substrate</name>
    </ligand>
</feature>
<feature type="binding site" evidence="1">
    <location>
        <position position="66"/>
    </location>
    <ligand>
        <name>substrate</name>
    </ligand>
</feature>
<feature type="binding site" evidence="1">
    <location>
        <position position="158"/>
    </location>
    <ligand>
        <name>substrate</name>
    </ligand>
</feature>
<feature type="binding site" evidence="1">
    <location>
        <begin position="181"/>
        <end position="186"/>
    </location>
    <ligand>
        <name>ATP</name>
        <dbReference type="ChEBI" id="CHEBI:30616"/>
    </ligand>
</feature>
<feature type="binding site" evidence="1">
    <location>
        <begin position="209"/>
        <end position="211"/>
    </location>
    <ligand>
        <name>ATP</name>
        <dbReference type="ChEBI" id="CHEBI:30616"/>
    </ligand>
</feature>
<feature type="site" description="Transition state stabilizer" evidence="1">
    <location>
        <position position="8"/>
    </location>
</feature>
<feature type="site" description="Transition state stabilizer" evidence="1">
    <location>
        <position position="217"/>
    </location>
</feature>
<keyword id="KW-0028">Amino-acid biosynthesis</keyword>
<keyword id="KW-0055">Arginine biosynthesis</keyword>
<keyword id="KW-0067">ATP-binding</keyword>
<keyword id="KW-0963">Cytoplasm</keyword>
<keyword id="KW-0418">Kinase</keyword>
<keyword id="KW-0547">Nucleotide-binding</keyword>
<keyword id="KW-1185">Reference proteome</keyword>
<keyword id="KW-0808">Transferase</keyword>
<proteinExistence type="inferred from homology"/>